<protein>
    <recommendedName>
        <fullName evidence="1">ESAT-6-like protein EsxC</fullName>
    </recommendedName>
</protein>
<gene>
    <name evidence="1" type="primary">esxC</name>
    <name type="ordered locus">MT4005</name>
</gene>
<dbReference type="EMBL" id="AE000516">
    <property type="protein sequence ID" value="AAK48372.1"/>
    <property type="molecule type" value="Genomic_DNA"/>
</dbReference>
<dbReference type="PIR" id="C70598">
    <property type="entry name" value="C70598"/>
</dbReference>
<dbReference type="RefSeq" id="WP_003899750.1">
    <property type="nucleotide sequence ID" value="NZ_KK341228.1"/>
</dbReference>
<dbReference type="SMR" id="P9WNI0"/>
<dbReference type="KEGG" id="mtc:MT4005"/>
<dbReference type="PATRIC" id="fig|83331.31.peg.4312"/>
<dbReference type="HOGENOM" id="CLU_183730_0_0_11"/>
<dbReference type="Proteomes" id="UP000001020">
    <property type="component" value="Chromosome"/>
</dbReference>
<dbReference type="GO" id="GO:0005576">
    <property type="term" value="C:extracellular region"/>
    <property type="evidence" value="ECO:0007669"/>
    <property type="project" value="UniProtKB-SubCell"/>
</dbReference>
<dbReference type="Gene3D" id="1.10.287.1060">
    <property type="entry name" value="ESAT-6-like"/>
    <property type="match status" value="1"/>
</dbReference>
<dbReference type="InterPro" id="IPR036689">
    <property type="entry name" value="ESAT-6-like_sf"/>
</dbReference>
<dbReference type="InterPro" id="IPR010310">
    <property type="entry name" value="T7SS_ESAT-6-like"/>
</dbReference>
<dbReference type="Pfam" id="PF06013">
    <property type="entry name" value="WXG100"/>
    <property type="match status" value="1"/>
</dbReference>
<dbReference type="SUPFAM" id="SSF140453">
    <property type="entry name" value="EsxAB dimer-like"/>
    <property type="match status" value="1"/>
</dbReference>
<organism>
    <name type="scientific">Mycobacterium tuberculosis (strain CDC 1551 / Oshkosh)</name>
    <dbReference type="NCBI Taxonomy" id="83331"/>
    <lineage>
        <taxon>Bacteria</taxon>
        <taxon>Bacillati</taxon>
        <taxon>Actinomycetota</taxon>
        <taxon>Actinomycetes</taxon>
        <taxon>Mycobacteriales</taxon>
        <taxon>Mycobacteriaceae</taxon>
        <taxon>Mycobacterium</taxon>
        <taxon>Mycobacterium tuberculosis complex</taxon>
    </lineage>
</organism>
<proteinExistence type="inferred from homology"/>
<name>ESXC_MYCTO</name>
<accession>P9WNI0</accession>
<accession>L0TE32</accession>
<accession>O05454</accession>
<sequence>MSDQITYNPGAVSDFASDVGSRAGQLHMIYEDTASKTNALQEFFAGHGAQGFFDAQAQMLSGLQGLIETVGQHGTTTGHVLDNAIGTDQAIAGLF</sequence>
<reference key="1">
    <citation type="journal article" date="2002" name="J. Bacteriol.">
        <title>Whole-genome comparison of Mycobacterium tuberculosis clinical and laboratory strains.</title>
        <authorList>
            <person name="Fleischmann R.D."/>
            <person name="Alland D."/>
            <person name="Eisen J.A."/>
            <person name="Carpenter L."/>
            <person name="White O."/>
            <person name="Peterson J.D."/>
            <person name="DeBoy R.T."/>
            <person name="Dodson R.J."/>
            <person name="Gwinn M.L."/>
            <person name="Haft D.H."/>
            <person name="Hickey E.K."/>
            <person name="Kolonay J.F."/>
            <person name="Nelson W.C."/>
            <person name="Umayam L.A."/>
            <person name="Ermolaeva M.D."/>
            <person name="Salzberg S.L."/>
            <person name="Delcher A."/>
            <person name="Utterback T.R."/>
            <person name="Weidman J.F."/>
            <person name="Khouri H.M."/>
            <person name="Gill J."/>
            <person name="Mikula A."/>
            <person name="Bishai W."/>
            <person name="Jacobs W.R. Jr."/>
            <person name="Venter J.C."/>
            <person name="Fraser C.M."/>
        </authorList>
    </citation>
    <scope>NUCLEOTIDE SEQUENCE [LARGE SCALE GENOMIC DNA]</scope>
    <source>
        <strain>CDC 1551 / Oshkosh</strain>
    </source>
</reference>
<keyword id="KW-1185">Reference proteome</keyword>
<keyword id="KW-0964">Secreted</keyword>
<feature type="chain" id="PRO_0000427123" description="ESAT-6-like protein EsxC">
    <location>
        <begin position="1"/>
        <end position="95"/>
    </location>
</feature>
<evidence type="ECO:0000250" key="1">
    <source>
        <dbReference type="UniProtKB" id="P9WNI1"/>
    </source>
</evidence>
<evidence type="ECO:0000305" key="2"/>
<comment type="subcellular location">
    <subcellularLocation>
        <location evidence="1">Secreted</location>
    </subcellularLocation>
    <text evidence="1">Probably secreted via the ESX-2 / type VII secretion system (T7SS).</text>
</comment>
<comment type="similarity">
    <text evidence="2">Belongs to the WXG100 family. ESAT-6 subfamily.</text>
</comment>